<reference key="1">
    <citation type="journal article" date="2002" name="Nature">
        <title>Complete genome sequence of the model actinomycete Streptomyces coelicolor A3(2).</title>
        <authorList>
            <person name="Bentley S.D."/>
            <person name="Chater K.F."/>
            <person name="Cerdeno-Tarraga A.-M."/>
            <person name="Challis G.L."/>
            <person name="Thomson N.R."/>
            <person name="James K.D."/>
            <person name="Harris D.E."/>
            <person name="Quail M.A."/>
            <person name="Kieser H."/>
            <person name="Harper D."/>
            <person name="Bateman A."/>
            <person name="Brown S."/>
            <person name="Chandra G."/>
            <person name="Chen C.W."/>
            <person name="Collins M."/>
            <person name="Cronin A."/>
            <person name="Fraser A."/>
            <person name="Goble A."/>
            <person name="Hidalgo J."/>
            <person name="Hornsby T."/>
            <person name="Howarth S."/>
            <person name="Huang C.-H."/>
            <person name="Kieser T."/>
            <person name="Larke L."/>
            <person name="Murphy L.D."/>
            <person name="Oliver K."/>
            <person name="O'Neil S."/>
            <person name="Rabbinowitsch E."/>
            <person name="Rajandream M.A."/>
            <person name="Rutherford K.M."/>
            <person name="Rutter S."/>
            <person name="Seeger K."/>
            <person name="Saunders D."/>
            <person name="Sharp S."/>
            <person name="Squares R."/>
            <person name="Squares S."/>
            <person name="Taylor K."/>
            <person name="Warren T."/>
            <person name="Wietzorrek A."/>
            <person name="Woodward J.R."/>
            <person name="Barrell B.G."/>
            <person name="Parkhill J."/>
            <person name="Hopwood D.A."/>
        </authorList>
    </citation>
    <scope>NUCLEOTIDE SEQUENCE [LARGE SCALE GENOMIC DNA]</scope>
    <source>
        <strain>ATCC BAA-471 / A3(2) / M145</strain>
    </source>
</reference>
<evidence type="ECO:0000255" key="1">
    <source>
        <dbReference type="HAMAP-Rule" id="MF_00028"/>
    </source>
</evidence>
<sequence>MNGGLLVAGTTSDAGKSVVTAGICRWLVRQGVKVAPFKAQNMSLNSFVTRDGAEIGRAQAMQAQACRVEPTAHMNPVLLKPGGERSSQVVLLGRPVGEMSARGYHGGRQERLLGTVLDSLAELRGTYDAVICEGAGSPAEINLRRTDIVNMGIARGAGLPVLVVGDIDRGGVFASFFGTVALLAPEDQALVAGFLVNKFRGDVSLLEPGLDMLHGLTGRRTYGVLPFRHGLGIDEEDGLRVSLRGTVRESVVAPPVGEDVLRVAVCAVPLMSNFTDVDALAAEPGVVVRFVDRPEELADADLVIVPGTRGTVRALEWLRERGLADAIARRAAERRPVLGICGGYQLLGEHIEDEVESRAGHVDGLGLLPVRVRFDREKTLTRAVGEALGEPVEGYEIHHGVAEVTGGAPFLDGCRVGRTWGTHWHGSLESDGFRRAFLREVAAAAGRRFVPAPDTSFAALREEQLDRLGDLIEHHADTDALWRLIESGAPQGLPFIPPGAPA</sequence>
<feature type="chain" id="PRO_0000141332" description="Cobyric acid synthase">
    <location>
        <begin position="1"/>
        <end position="502"/>
    </location>
</feature>
<feature type="domain" description="GATase cobBQ-type" evidence="1">
    <location>
        <begin position="260"/>
        <end position="433"/>
    </location>
</feature>
<feature type="active site" description="Nucleophile" evidence="1">
    <location>
        <position position="341"/>
    </location>
</feature>
<feature type="active site" evidence="1">
    <location>
        <position position="425"/>
    </location>
</feature>
<dbReference type="EMBL" id="AL939110">
    <property type="protein sequence ID" value="CAB59464.1"/>
    <property type="molecule type" value="Genomic_DNA"/>
</dbReference>
<dbReference type="RefSeq" id="NP_626116.1">
    <property type="nucleotide sequence ID" value="NC_003888.3"/>
</dbReference>
<dbReference type="RefSeq" id="WP_011028007.1">
    <property type="nucleotide sequence ID" value="NZ_VNID01000001.1"/>
</dbReference>
<dbReference type="FunCoup" id="Q9RJ20">
    <property type="interactions" value="114"/>
</dbReference>
<dbReference type="STRING" id="100226.gene:17759445"/>
<dbReference type="PaxDb" id="100226-SCO1848"/>
<dbReference type="KEGG" id="sco:SCO1848"/>
<dbReference type="PATRIC" id="fig|100226.15.peg.1872"/>
<dbReference type="eggNOG" id="COG1492">
    <property type="taxonomic scope" value="Bacteria"/>
</dbReference>
<dbReference type="HOGENOM" id="CLU_019250_2_2_11"/>
<dbReference type="InParanoid" id="Q9RJ20"/>
<dbReference type="OrthoDB" id="9808302at2"/>
<dbReference type="PhylomeDB" id="Q9RJ20"/>
<dbReference type="UniPathway" id="UPA00148"/>
<dbReference type="Proteomes" id="UP000001973">
    <property type="component" value="Chromosome"/>
</dbReference>
<dbReference type="GO" id="GO:0015420">
    <property type="term" value="F:ABC-type vitamin B12 transporter activity"/>
    <property type="evidence" value="ECO:0007669"/>
    <property type="project" value="UniProtKB-UniRule"/>
</dbReference>
<dbReference type="GO" id="GO:0003824">
    <property type="term" value="F:catalytic activity"/>
    <property type="evidence" value="ECO:0007669"/>
    <property type="project" value="InterPro"/>
</dbReference>
<dbReference type="GO" id="GO:0009236">
    <property type="term" value="P:cobalamin biosynthetic process"/>
    <property type="evidence" value="ECO:0007669"/>
    <property type="project" value="UniProtKB-UniRule"/>
</dbReference>
<dbReference type="CDD" id="cd05389">
    <property type="entry name" value="CobQ_N"/>
    <property type="match status" value="1"/>
</dbReference>
<dbReference type="CDD" id="cd01750">
    <property type="entry name" value="GATase1_CobQ"/>
    <property type="match status" value="1"/>
</dbReference>
<dbReference type="Gene3D" id="3.40.50.880">
    <property type="match status" value="1"/>
</dbReference>
<dbReference type="Gene3D" id="3.40.50.300">
    <property type="entry name" value="P-loop containing nucleotide triphosphate hydrolases"/>
    <property type="match status" value="1"/>
</dbReference>
<dbReference type="HAMAP" id="MF_00028">
    <property type="entry name" value="CobQ"/>
    <property type="match status" value="1"/>
</dbReference>
<dbReference type="InterPro" id="IPR029062">
    <property type="entry name" value="Class_I_gatase-like"/>
</dbReference>
<dbReference type="InterPro" id="IPR002586">
    <property type="entry name" value="CobQ/CobB/MinD/ParA_Nub-bd_dom"/>
</dbReference>
<dbReference type="InterPro" id="IPR033949">
    <property type="entry name" value="CobQ_GATase1"/>
</dbReference>
<dbReference type="InterPro" id="IPR047045">
    <property type="entry name" value="CobQ_N"/>
</dbReference>
<dbReference type="InterPro" id="IPR004459">
    <property type="entry name" value="CobQ_synth"/>
</dbReference>
<dbReference type="InterPro" id="IPR011698">
    <property type="entry name" value="GATase_3"/>
</dbReference>
<dbReference type="InterPro" id="IPR027417">
    <property type="entry name" value="P-loop_NTPase"/>
</dbReference>
<dbReference type="NCBIfam" id="TIGR00313">
    <property type="entry name" value="cobQ"/>
    <property type="match status" value="1"/>
</dbReference>
<dbReference type="NCBIfam" id="NF001989">
    <property type="entry name" value="PRK00784.1"/>
    <property type="match status" value="1"/>
</dbReference>
<dbReference type="PANTHER" id="PTHR21343:SF1">
    <property type="entry name" value="COBYRIC ACID SYNTHASE"/>
    <property type="match status" value="1"/>
</dbReference>
<dbReference type="PANTHER" id="PTHR21343">
    <property type="entry name" value="DETHIOBIOTIN SYNTHETASE"/>
    <property type="match status" value="1"/>
</dbReference>
<dbReference type="Pfam" id="PF01656">
    <property type="entry name" value="CbiA"/>
    <property type="match status" value="1"/>
</dbReference>
<dbReference type="Pfam" id="PF07685">
    <property type="entry name" value="GATase_3"/>
    <property type="match status" value="1"/>
</dbReference>
<dbReference type="SUPFAM" id="SSF52317">
    <property type="entry name" value="Class I glutamine amidotransferase-like"/>
    <property type="match status" value="1"/>
</dbReference>
<dbReference type="SUPFAM" id="SSF52540">
    <property type="entry name" value="P-loop containing nucleoside triphosphate hydrolases"/>
    <property type="match status" value="1"/>
</dbReference>
<dbReference type="PROSITE" id="PS51274">
    <property type="entry name" value="GATASE_COBBQ"/>
    <property type="match status" value="1"/>
</dbReference>
<keyword id="KW-0169">Cobalamin biosynthesis</keyword>
<keyword id="KW-0315">Glutamine amidotransferase</keyword>
<keyword id="KW-1185">Reference proteome</keyword>
<comment type="function">
    <text evidence="1">Catalyzes amidations at positions B, D, E, and G on adenosylcobyrinic A,C-diamide. NH(2) groups are provided by glutamine, and one molecule of ATP is hydrogenolyzed for each amidation.</text>
</comment>
<comment type="pathway">
    <text evidence="1">Cofactor biosynthesis; adenosylcobalamin biosynthesis.</text>
</comment>
<comment type="similarity">
    <text evidence="1">Belongs to the CobB/CobQ family. CobQ subfamily.</text>
</comment>
<proteinExistence type="inferred from homology"/>
<gene>
    <name evidence="1" type="primary">cobQ</name>
    <name type="ordered locus">SCO1848</name>
    <name type="ORF">SCI8.33</name>
</gene>
<name>COBQ_STRCO</name>
<protein>
    <recommendedName>
        <fullName evidence="1">Cobyric acid synthase</fullName>
    </recommendedName>
</protein>
<organism>
    <name type="scientific">Streptomyces coelicolor (strain ATCC BAA-471 / A3(2) / M145)</name>
    <dbReference type="NCBI Taxonomy" id="100226"/>
    <lineage>
        <taxon>Bacteria</taxon>
        <taxon>Bacillati</taxon>
        <taxon>Actinomycetota</taxon>
        <taxon>Actinomycetes</taxon>
        <taxon>Kitasatosporales</taxon>
        <taxon>Streptomycetaceae</taxon>
        <taxon>Streptomyces</taxon>
        <taxon>Streptomyces albidoflavus group</taxon>
    </lineage>
</organism>
<accession>Q9RJ20</accession>